<evidence type="ECO:0000255" key="1">
    <source>
        <dbReference type="HAMAP-Rule" id="MF_00034"/>
    </source>
</evidence>
<proteinExistence type="inferred from homology"/>
<gene>
    <name evidence="1" type="primary">ruvC</name>
    <name type="ordered locus">Amuc_2024</name>
</gene>
<sequence length="167" mass="18192">MRILAIDPAIRNTGYAVVEGDYRRARALDYGTLSIPRSVSQSGCLLAIKQHLGNLIDKWNPDEMAVERIIYVQSHQTAITMGAAKAAVVIAAAEAGLRIMEYSPKSVKLSVVGRGAAQKTQVAFMVRALLELRETPESDAADALAIGLTHLFSADPLKAHMMERKYI</sequence>
<organism>
    <name type="scientific">Akkermansia muciniphila (strain ATCC BAA-835 / DSM 22959 / JCM 33894 / BCRC 81048 / CCUG 64013 / CIP 107961 / Muc)</name>
    <dbReference type="NCBI Taxonomy" id="349741"/>
    <lineage>
        <taxon>Bacteria</taxon>
        <taxon>Pseudomonadati</taxon>
        <taxon>Verrucomicrobiota</taxon>
        <taxon>Verrucomicrobiia</taxon>
        <taxon>Verrucomicrobiales</taxon>
        <taxon>Akkermansiaceae</taxon>
        <taxon>Akkermansia</taxon>
    </lineage>
</organism>
<comment type="function">
    <text evidence="1">The RuvA-RuvB-RuvC complex processes Holliday junction (HJ) DNA during genetic recombination and DNA repair. Endonuclease that resolves HJ intermediates. Cleaves cruciform DNA by making single-stranded nicks across the HJ at symmetrical positions within the homologous arms, yielding a 5'-phosphate and a 3'-hydroxyl group; requires a central core of homology in the junction. The consensus cleavage sequence is 5'-(A/T)TT(C/G)-3'. Cleavage occurs on the 3'-side of the TT dinucleotide at the point of strand exchange. HJ branch migration catalyzed by RuvA-RuvB allows RuvC to scan DNA until it finds its consensus sequence, where it cleaves and resolves the cruciform DNA.</text>
</comment>
<comment type="catalytic activity">
    <reaction evidence="1">
        <text>Endonucleolytic cleavage at a junction such as a reciprocal single-stranded crossover between two homologous DNA duplexes (Holliday junction).</text>
        <dbReference type="EC" id="3.1.21.10"/>
    </reaction>
</comment>
<comment type="cofactor">
    <cofactor evidence="1">
        <name>Mg(2+)</name>
        <dbReference type="ChEBI" id="CHEBI:18420"/>
    </cofactor>
    <text evidence="1">Binds 2 Mg(2+) ion per subunit.</text>
</comment>
<comment type="subunit">
    <text evidence="1">Homodimer which binds Holliday junction (HJ) DNA. The HJ becomes 2-fold symmetrical on binding to RuvC with unstacked arms; it has a different conformation from HJ DNA in complex with RuvA. In the full resolvosome a probable DNA-RuvA(4)-RuvB(12)-RuvC(2) complex forms which resolves the HJ.</text>
</comment>
<comment type="subcellular location">
    <subcellularLocation>
        <location evidence="1">Cytoplasm</location>
    </subcellularLocation>
</comment>
<comment type="similarity">
    <text evidence="1">Belongs to the RuvC family.</text>
</comment>
<feature type="chain" id="PRO_1000090499" description="Crossover junction endodeoxyribonuclease RuvC">
    <location>
        <begin position="1"/>
        <end position="167"/>
    </location>
</feature>
<feature type="active site" evidence="1">
    <location>
        <position position="7"/>
    </location>
</feature>
<feature type="active site" evidence="1">
    <location>
        <position position="67"/>
    </location>
</feature>
<feature type="active site" evidence="1">
    <location>
        <position position="139"/>
    </location>
</feature>
<feature type="binding site" evidence="1">
    <location>
        <position position="7"/>
    </location>
    <ligand>
        <name>Mg(2+)</name>
        <dbReference type="ChEBI" id="CHEBI:18420"/>
        <label>1</label>
    </ligand>
</feature>
<feature type="binding site" evidence="1">
    <location>
        <position position="67"/>
    </location>
    <ligand>
        <name>Mg(2+)</name>
        <dbReference type="ChEBI" id="CHEBI:18420"/>
        <label>2</label>
    </ligand>
</feature>
<feature type="binding site" evidence="1">
    <location>
        <position position="139"/>
    </location>
    <ligand>
        <name>Mg(2+)</name>
        <dbReference type="ChEBI" id="CHEBI:18420"/>
        <label>1</label>
    </ligand>
</feature>
<protein>
    <recommendedName>
        <fullName evidence="1">Crossover junction endodeoxyribonuclease RuvC</fullName>
        <ecNumber evidence="1">3.1.21.10</ecNumber>
    </recommendedName>
    <alternativeName>
        <fullName evidence="1">Holliday junction nuclease RuvC</fullName>
    </alternativeName>
    <alternativeName>
        <fullName evidence="1">Holliday junction resolvase RuvC</fullName>
    </alternativeName>
</protein>
<dbReference type="EC" id="3.1.21.10" evidence="1"/>
<dbReference type="EMBL" id="CP001071">
    <property type="protein sequence ID" value="ACD05834.1"/>
    <property type="molecule type" value="Genomic_DNA"/>
</dbReference>
<dbReference type="RefSeq" id="WP_012421048.1">
    <property type="nucleotide sequence ID" value="NZ_CP071807.1"/>
</dbReference>
<dbReference type="SMR" id="B2UP63"/>
<dbReference type="STRING" id="349741.Amuc_2024"/>
<dbReference type="PaxDb" id="349741-Amuc_2024"/>
<dbReference type="GeneID" id="60881605"/>
<dbReference type="KEGG" id="amu:Amuc_2024"/>
<dbReference type="eggNOG" id="COG0817">
    <property type="taxonomic scope" value="Bacteria"/>
</dbReference>
<dbReference type="HOGENOM" id="CLU_091257_1_0_0"/>
<dbReference type="OrthoDB" id="9805499at2"/>
<dbReference type="BioCyc" id="AMUC349741:G1GBX-2155-MONOMER"/>
<dbReference type="Proteomes" id="UP000001031">
    <property type="component" value="Chromosome"/>
</dbReference>
<dbReference type="GO" id="GO:0005737">
    <property type="term" value="C:cytoplasm"/>
    <property type="evidence" value="ECO:0007669"/>
    <property type="project" value="UniProtKB-SubCell"/>
</dbReference>
<dbReference type="GO" id="GO:0048476">
    <property type="term" value="C:Holliday junction resolvase complex"/>
    <property type="evidence" value="ECO:0007669"/>
    <property type="project" value="UniProtKB-UniRule"/>
</dbReference>
<dbReference type="GO" id="GO:0008821">
    <property type="term" value="F:crossover junction DNA endonuclease activity"/>
    <property type="evidence" value="ECO:0007669"/>
    <property type="project" value="UniProtKB-UniRule"/>
</dbReference>
<dbReference type="GO" id="GO:0003677">
    <property type="term" value="F:DNA binding"/>
    <property type="evidence" value="ECO:0007669"/>
    <property type="project" value="UniProtKB-KW"/>
</dbReference>
<dbReference type="GO" id="GO:0000287">
    <property type="term" value="F:magnesium ion binding"/>
    <property type="evidence" value="ECO:0007669"/>
    <property type="project" value="UniProtKB-UniRule"/>
</dbReference>
<dbReference type="GO" id="GO:0006310">
    <property type="term" value="P:DNA recombination"/>
    <property type="evidence" value="ECO:0007669"/>
    <property type="project" value="UniProtKB-UniRule"/>
</dbReference>
<dbReference type="GO" id="GO:0006281">
    <property type="term" value="P:DNA repair"/>
    <property type="evidence" value="ECO:0007669"/>
    <property type="project" value="UniProtKB-UniRule"/>
</dbReference>
<dbReference type="CDD" id="cd16962">
    <property type="entry name" value="RuvC"/>
    <property type="match status" value="1"/>
</dbReference>
<dbReference type="FunFam" id="3.30.420.10:FF:000002">
    <property type="entry name" value="Crossover junction endodeoxyribonuclease RuvC"/>
    <property type="match status" value="1"/>
</dbReference>
<dbReference type="Gene3D" id="3.30.420.10">
    <property type="entry name" value="Ribonuclease H-like superfamily/Ribonuclease H"/>
    <property type="match status" value="1"/>
</dbReference>
<dbReference type="HAMAP" id="MF_00034">
    <property type="entry name" value="RuvC"/>
    <property type="match status" value="1"/>
</dbReference>
<dbReference type="InterPro" id="IPR012337">
    <property type="entry name" value="RNaseH-like_sf"/>
</dbReference>
<dbReference type="InterPro" id="IPR036397">
    <property type="entry name" value="RNaseH_sf"/>
</dbReference>
<dbReference type="InterPro" id="IPR002176">
    <property type="entry name" value="X-over_junc_endoDNase_RuvC"/>
</dbReference>
<dbReference type="NCBIfam" id="TIGR00228">
    <property type="entry name" value="ruvC"/>
    <property type="match status" value="1"/>
</dbReference>
<dbReference type="PANTHER" id="PTHR30194">
    <property type="entry name" value="CROSSOVER JUNCTION ENDODEOXYRIBONUCLEASE RUVC"/>
    <property type="match status" value="1"/>
</dbReference>
<dbReference type="PANTHER" id="PTHR30194:SF3">
    <property type="entry name" value="CROSSOVER JUNCTION ENDODEOXYRIBONUCLEASE RUVC"/>
    <property type="match status" value="1"/>
</dbReference>
<dbReference type="Pfam" id="PF02075">
    <property type="entry name" value="RuvC"/>
    <property type="match status" value="1"/>
</dbReference>
<dbReference type="PRINTS" id="PR00696">
    <property type="entry name" value="RSOLVASERUVC"/>
</dbReference>
<dbReference type="SUPFAM" id="SSF53098">
    <property type="entry name" value="Ribonuclease H-like"/>
    <property type="match status" value="1"/>
</dbReference>
<keyword id="KW-0963">Cytoplasm</keyword>
<keyword id="KW-0227">DNA damage</keyword>
<keyword id="KW-0233">DNA recombination</keyword>
<keyword id="KW-0234">DNA repair</keyword>
<keyword id="KW-0238">DNA-binding</keyword>
<keyword id="KW-0255">Endonuclease</keyword>
<keyword id="KW-0378">Hydrolase</keyword>
<keyword id="KW-0460">Magnesium</keyword>
<keyword id="KW-0479">Metal-binding</keyword>
<keyword id="KW-0540">Nuclease</keyword>
<keyword id="KW-1185">Reference proteome</keyword>
<accession>B2UP63</accession>
<name>RUVC_AKKM8</name>
<reference key="1">
    <citation type="journal article" date="2011" name="PLoS ONE">
        <title>The genome of Akkermansia muciniphila, a dedicated intestinal mucin degrader, and its use in exploring intestinal metagenomes.</title>
        <authorList>
            <person name="van Passel M.W."/>
            <person name="Kant R."/>
            <person name="Zoetendal E.G."/>
            <person name="Plugge C.M."/>
            <person name="Derrien M."/>
            <person name="Malfatti S.A."/>
            <person name="Chain P.S."/>
            <person name="Woyke T."/>
            <person name="Palva A."/>
            <person name="de Vos W.M."/>
            <person name="Smidt H."/>
        </authorList>
    </citation>
    <scope>NUCLEOTIDE SEQUENCE [LARGE SCALE GENOMIC DNA]</scope>
    <source>
        <strain>ATCC BAA-835 / DSM 22959 / JCM 33894 / BCRC 81048 / CCUG 64013 / CIP 107961 / Muc</strain>
    </source>
</reference>